<comment type="function">
    <text evidence="1">Key enzyme in the regulation of glycerol uptake and metabolism. Catalyzes the phosphorylation of glycerol to yield sn-glycerol 3-phosphate.</text>
</comment>
<comment type="catalytic activity">
    <reaction evidence="1">
        <text>glycerol + ATP = sn-glycerol 3-phosphate + ADP + H(+)</text>
        <dbReference type="Rhea" id="RHEA:21644"/>
        <dbReference type="ChEBI" id="CHEBI:15378"/>
        <dbReference type="ChEBI" id="CHEBI:17754"/>
        <dbReference type="ChEBI" id="CHEBI:30616"/>
        <dbReference type="ChEBI" id="CHEBI:57597"/>
        <dbReference type="ChEBI" id="CHEBI:456216"/>
        <dbReference type="EC" id="2.7.1.30"/>
    </reaction>
</comment>
<comment type="activity regulation">
    <text evidence="1">Inhibited by fructose 1,6-bisphosphate (FBP).</text>
</comment>
<comment type="pathway">
    <text evidence="1">Polyol metabolism; glycerol degradation via glycerol kinase pathway; sn-glycerol 3-phosphate from glycerol: step 1/1.</text>
</comment>
<comment type="similarity">
    <text evidence="1">Belongs to the FGGY kinase family.</text>
</comment>
<organism>
    <name type="scientific">Gluconobacter oxydans (strain 621H)</name>
    <name type="common">Gluconobacter suboxydans</name>
    <dbReference type="NCBI Taxonomy" id="290633"/>
    <lineage>
        <taxon>Bacteria</taxon>
        <taxon>Pseudomonadati</taxon>
        <taxon>Pseudomonadota</taxon>
        <taxon>Alphaproteobacteria</taxon>
        <taxon>Acetobacterales</taxon>
        <taxon>Acetobacteraceae</taxon>
        <taxon>Gluconobacter</taxon>
    </lineage>
</organism>
<accession>Q5FP70</accession>
<feature type="chain" id="PRO_1000020732" description="Glycerol kinase">
    <location>
        <begin position="1"/>
        <end position="512"/>
    </location>
</feature>
<feature type="binding site" evidence="1">
    <location>
        <position position="14"/>
    </location>
    <ligand>
        <name>ADP</name>
        <dbReference type="ChEBI" id="CHEBI:456216"/>
    </ligand>
</feature>
<feature type="binding site" evidence="1">
    <location>
        <position position="14"/>
    </location>
    <ligand>
        <name>ATP</name>
        <dbReference type="ChEBI" id="CHEBI:30616"/>
    </ligand>
</feature>
<feature type="binding site" evidence="1">
    <location>
        <position position="14"/>
    </location>
    <ligand>
        <name>sn-glycerol 3-phosphate</name>
        <dbReference type="ChEBI" id="CHEBI:57597"/>
    </ligand>
</feature>
<feature type="binding site" evidence="1">
    <location>
        <position position="15"/>
    </location>
    <ligand>
        <name>ATP</name>
        <dbReference type="ChEBI" id="CHEBI:30616"/>
    </ligand>
</feature>
<feature type="binding site" evidence="1">
    <location>
        <position position="16"/>
    </location>
    <ligand>
        <name>ATP</name>
        <dbReference type="ChEBI" id="CHEBI:30616"/>
    </ligand>
</feature>
<feature type="binding site" evidence="1">
    <location>
        <position position="18"/>
    </location>
    <ligand>
        <name>ADP</name>
        <dbReference type="ChEBI" id="CHEBI:456216"/>
    </ligand>
</feature>
<feature type="binding site" evidence="1">
    <location>
        <position position="83"/>
    </location>
    <ligand>
        <name>glycerol</name>
        <dbReference type="ChEBI" id="CHEBI:17754"/>
    </ligand>
</feature>
<feature type="binding site" evidence="1">
    <location>
        <position position="83"/>
    </location>
    <ligand>
        <name>sn-glycerol 3-phosphate</name>
        <dbReference type="ChEBI" id="CHEBI:57597"/>
    </ligand>
</feature>
<feature type="binding site" evidence="1">
    <location>
        <position position="84"/>
    </location>
    <ligand>
        <name>glycerol</name>
        <dbReference type="ChEBI" id="CHEBI:17754"/>
    </ligand>
</feature>
<feature type="binding site" evidence="1">
    <location>
        <position position="84"/>
    </location>
    <ligand>
        <name>sn-glycerol 3-phosphate</name>
        <dbReference type="ChEBI" id="CHEBI:57597"/>
    </ligand>
</feature>
<feature type="binding site" evidence="1">
    <location>
        <position position="135"/>
    </location>
    <ligand>
        <name>glycerol</name>
        <dbReference type="ChEBI" id="CHEBI:17754"/>
    </ligand>
</feature>
<feature type="binding site" evidence="1">
    <location>
        <position position="135"/>
    </location>
    <ligand>
        <name>sn-glycerol 3-phosphate</name>
        <dbReference type="ChEBI" id="CHEBI:57597"/>
    </ligand>
</feature>
<feature type="binding site" evidence="1">
    <location>
        <position position="244"/>
    </location>
    <ligand>
        <name>glycerol</name>
        <dbReference type="ChEBI" id="CHEBI:17754"/>
    </ligand>
</feature>
<feature type="binding site" evidence="1">
    <location>
        <position position="244"/>
    </location>
    <ligand>
        <name>sn-glycerol 3-phosphate</name>
        <dbReference type="ChEBI" id="CHEBI:57597"/>
    </ligand>
</feature>
<feature type="binding site" evidence="1">
    <location>
        <position position="245"/>
    </location>
    <ligand>
        <name>glycerol</name>
        <dbReference type="ChEBI" id="CHEBI:17754"/>
    </ligand>
</feature>
<feature type="binding site" evidence="1">
    <location>
        <position position="266"/>
    </location>
    <ligand>
        <name>ADP</name>
        <dbReference type="ChEBI" id="CHEBI:456216"/>
    </ligand>
</feature>
<feature type="binding site" evidence="1">
    <location>
        <position position="266"/>
    </location>
    <ligand>
        <name>ATP</name>
        <dbReference type="ChEBI" id="CHEBI:30616"/>
    </ligand>
</feature>
<feature type="binding site" evidence="1">
    <location>
        <position position="309"/>
    </location>
    <ligand>
        <name>ADP</name>
        <dbReference type="ChEBI" id="CHEBI:456216"/>
    </ligand>
</feature>
<feature type="binding site" evidence="1">
    <location>
        <position position="309"/>
    </location>
    <ligand>
        <name>ATP</name>
        <dbReference type="ChEBI" id="CHEBI:30616"/>
    </ligand>
</feature>
<feature type="binding site" evidence="1">
    <location>
        <position position="410"/>
    </location>
    <ligand>
        <name>ADP</name>
        <dbReference type="ChEBI" id="CHEBI:456216"/>
    </ligand>
</feature>
<feature type="binding site" evidence="1">
    <location>
        <position position="410"/>
    </location>
    <ligand>
        <name>ATP</name>
        <dbReference type="ChEBI" id="CHEBI:30616"/>
    </ligand>
</feature>
<feature type="binding site" evidence="1">
    <location>
        <position position="414"/>
    </location>
    <ligand>
        <name>ADP</name>
        <dbReference type="ChEBI" id="CHEBI:456216"/>
    </ligand>
</feature>
<proteinExistence type="inferred from homology"/>
<protein>
    <recommendedName>
        <fullName evidence="1">Glycerol kinase</fullName>
        <ecNumber evidence="1">2.7.1.30</ecNumber>
    </recommendedName>
    <alternativeName>
        <fullName evidence="1">ATP:glycerol 3-phosphotransferase</fullName>
    </alternativeName>
    <alternativeName>
        <fullName evidence="1">Glycerokinase</fullName>
        <shortName evidence="1">GK</shortName>
    </alternativeName>
</protein>
<dbReference type="EC" id="2.7.1.30" evidence="1"/>
<dbReference type="EMBL" id="CP000009">
    <property type="protein sequence ID" value="AAW61826.1"/>
    <property type="molecule type" value="Genomic_DNA"/>
</dbReference>
<dbReference type="RefSeq" id="WP_011253603.1">
    <property type="nucleotide sequence ID" value="NC_006677.1"/>
</dbReference>
<dbReference type="SMR" id="Q5FP70"/>
<dbReference type="STRING" id="290633.GOX2090"/>
<dbReference type="KEGG" id="gox:GOX2090"/>
<dbReference type="eggNOG" id="COG0554">
    <property type="taxonomic scope" value="Bacteria"/>
</dbReference>
<dbReference type="HOGENOM" id="CLU_009281_2_3_5"/>
<dbReference type="UniPathway" id="UPA00618">
    <property type="reaction ID" value="UER00672"/>
</dbReference>
<dbReference type="Proteomes" id="UP000006375">
    <property type="component" value="Chromosome"/>
</dbReference>
<dbReference type="GO" id="GO:0005829">
    <property type="term" value="C:cytosol"/>
    <property type="evidence" value="ECO:0007669"/>
    <property type="project" value="TreeGrafter"/>
</dbReference>
<dbReference type="GO" id="GO:0005524">
    <property type="term" value="F:ATP binding"/>
    <property type="evidence" value="ECO:0007669"/>
    <property type="project" value="UniProtKB-UniRule"/>
</dbReference>
<dbReference type="GO" id="GO:0004370">
    <property type="term" value="F:glycerol kinase activity"/>
    <property type="evidence" value="ECO:0000250"/>
    <property type="project" value="UniProtKB"/>
</dbReference>
<dbReference type="GO" id="GO:0019563">
    <property type="term" value="P:glycerol catabolic process"/>
    <property type="evidence" value="ECO:0007669"/>
    <property type="project" value="UniProtKB-UniRule"/>
</dbReference>
<dbReference type="GO" id="GO:0006071">
    <property type="term" value="P:glycerol metabolic process"/>
    <property type="evidence" value="ECO:0000250"/>
    <property type="project" value="UniProtKB"/>
</dbReference>
<dbReference type="GO" id="GO:0006072">
    <property type="term" value="P:glycerol-3-phosphate metabolic process"/>
    <property type="evidence" value="ECO:0007669"/>
    <property type="project" value="InterPro"/>
</dbReference>
<dbReference type="CDD" id="cd07786">
    <property type="entry name" value="FGGY_EcGK_like"/>
    <property type="match status" value="1"/>
</dbReference>
<dbReference type="FunFam" id="3.30.420.40:FF:000007">
    <property type="entry name" value="Glycerol kinase"/>
    <property type="match status" value="1"/>
</dbReference>
<dbReference type="FunFam" id="3.30.420.40:FF:000008">
    <property type="entry name" value="Glycerol kinase"/>
    <property type="match status" value="1"/>
</dbReference>
<dbReference type="Gene3D" id="3.30.420.40">
    <property type="match status" value="2"/>
</dbReference>
<dbReference type="HAMAP" id="MF_00186">
    <property type="entry name" value="Glycerol_kin"/>
    <property type="match status" value="1"/>
</dbReference>
<dbReference type="InterPro" id="IPR043129">
    <property type="entry name" value="ATPase_NBD"/>
</dbReference>
<dbReference type="InterPro" id="IPR000577">
    <property type="entry name" value="Carb_kinase_FGGY"/>
</dbReference>
<dbReference type="InterPro" id="IPR018483">
    <property type="entry name" value="Carb_kinase_FGGY_CS"/>
</dbReference>
<dbReference type="InterPro" id="IPR018485">
    <property type="entry name" value="FGGY_C"/>
</dbReference>
<dbReference type="InterPro" id="IPR018484">
    <property type="entry name" value="FGGY_N"/>
</dbReference>
<dbReference type="InterPro" id="IPR005999">
    <property type="entry name" value="Glycerol_kin"/>
</dbReference>
<dbReference type="NCBIfam" id="TIGR01311">
    <property type="entry name" value="glycerol_kin"/>
    <property type="match status" value="1"/>
</dbReference>
<dbReference type="NCBIfam" id="NF000756">
    <property type="entry name" value="PRK00047.1"/>
    <property type="match status" value="1"/>
</dbReference>
<dbReference type="PANTHER" id="PTHR10196:SF78">
    <property type="entry name" value="GLYCEROL KINASE"/>
    <property type="match status" value="1"/>
</dbReference>
<dbReference type="PANTHER" id="PTHR10196">
    <property type="entry name" value="SUGAR KINASE"/>
    <property type="match status" value="1"/>
</dbReference>
<dbReference type="Pfam" id="PF02782">
    <property type="entry name" value="FGGY_C"/>
    <property type="match status" value="1"/>
</dbReference>
<dbReference type="Pfam" id="PF00370">
    <property type="entry name" value="FGGY_N"/>
    <property type="match status" value="1"/>
</dbReference>
<dbReference type="PIRSF" id="PIRSF000538">
    <property type="entry name" value="GlpK"/>
    <property type="match status" value="1"/>
</dbReference>
<dbReference type="SUPFAM" id="SSF53067">
    <property type="entry name" value="Actin-like ATPase domain"/>
    <property type="match status" value="2"/>
</dbReference>
<dbReference type="PROSITE" id="PS00933">
    <property type="entry name" value="FGGY_KINASES_1"/>
    <property type="match status" value="1"/>
</dbReference>
<dbReference type="PROSITE" id="PS00445">
    <property type="entry name" value="FGGY_KINASES_2"/>
    <property type="match status" value="1"/>
</dbReference>
<reference key="1">
    <citation type="journal article" date="2005" name="Nat. Biotechnol.">
        <title>Complete genome sequence of the acetic acid bacterium Gluconobacter oxydans.</title>
        <authorList>
            <person name="Prust C."/>
            <person name="Hoffmeister M."/>
            <person name="Liesegang H."/>
            <person name="Wiezer A."/>
            <person name="Fricke W.F."/>
            <person name="Ehrenreich A."/>
            <person name="Gottschalk G."/>
            <person name="Deppenmeier U."/>
        </authorList>
    </citation>
    <scope>NUCLEOTIDE SEQUENCE [LARGE SCALE GENOMIC DNA]</scope>
    <source>
        <strain>621H</strain>
    </source>
</reference>
<sequence length="512" mass="56559">MSKKDCILAIDQGTTSTRSIVFGKDAQALAISRREFPQHYPELGWVEHDVEDIWRDVLATARETIEEVGGPERIAALGITNQRETIVIWDRETGRAIHRALVWQDRRTAHECNLLRQQGKEAMVREKTGLLLDPYFSASKIAWLLDHVPDARRRAEAGELAAGTIDSFLLWRLTGGKRHATDITNACRTSLFNIHTQEWDEELLKLFNVPRALLPEVCDNSSDFGETEAKLFGEKIAIGGMAGDQHAAVIGQACFHEGMAKATYGTGCFMLLNTGEKPIMSNNRLLTTIAYRIGGKTFYALEGSIFVAGAGIKWLRDGLKLITHASQTDDMATRIPDSHGVYMVPAFVGLGAPHWDPDSRGLICGLTLGSTQAHIARAMLESVAYQTYDLIRAMREDGAMRTSILRIDGGMAVNDWFAQFLSSMLKAEVERPVNIETTALGAAFLAGLQVGLWKSLDEVTATWKQERVFAPKMDPAQRRIMIDGWHDAVRRTLTPSAPVAHSSVETTASQAA</sequence>
<name>GLPK_GLUOX</name>
<evidence type="ECO:0000255" key="1">
    <source>
        <dbReference type="HAMAP-Rule" id="MF_00186"/>
    </source>
</evidence>
<gene>
    <name evidence="1" type="primary">glpK</name>
    <name type="ordered locus">GOX2090</name>
</gene>
<keyword id="KW-0067">ATP-binding</keyword>
<keyword id="KW-0319">Glycerol metabolism</keyword>
<keyword id="KW-0418">Kinase</keyword>
<keyword id="KW-0547">Nucleotide-binding</keyword>
<keyword id="KW-1185">Reference proteome</keyword>
<keyword id="KW-0808">Transferase</keyword>